<name>DRE2_ANOGA</name>
<reference key="1">
    <citation type="journal article" date="2002" name="Science">
        <title>The genome sequence of the malaria mosquito Anopheles gambiae.</title>
        <authorList>
            <person name="Holt R.A."/>
            <person name="Subramanian G.M."/>
            <person name="Halpern A."/>
            <person name="Sutton G.G."/>
            <person name="Charlab R."/>
            <person name="Nusskern D.R."/>
            <person name="Wincker P."/>
            <person name="Clark A.G."/>
            <person name="Ribeiro J.M.C."/>
            <person name="Wides R."/>
            <person name="Salzberg S.L."/>
            <person name="Loftus B.J."/>
            <person name="Yandell M.D."/>
            <person name="Majoros W.H."/>
            <person name="Rusch D.B."/>
            <person name="Lai Z."/>
            <person name="Kraft C.L."/>
            <person name="Abril J.F."/>
            <person name="Anthouard V."/>
            <person name="Arensburger P."/>
            <person name="Atkinson P.W."/>
            <person name="Baden H."/>
            <person name="de Berardinis V."/>
            <person name="Baldwin D."/>
            <person name="Benes V."/>
            <person name="Biedler J."/>
            <person name="Blass C."/>
            <person name="Bolanos R."/>
            <person name="Boscus D."/>
            <person name="Barnstead M."/>
            <person name="Cai S."/>
            <person name="Center A."/>
            <person name="Chaturverdi K."/>
            <person name="Christophides G.K."/>
            <person name="Chrystal M.A.M."/>
            <person name="Clamp M."/>
            <person name="Cravchik A."/>
            <person name="Curwen V."/>
            <person name="Dana A."/>
            <person name="Delcher A."/>
            <person name="Dew I."/>
            <person name="Evans C.A."/>
            <person name="Flanigan M."/>
            <person name="Grundschober-Freimoser A."/>
            <person name="Friedli L."/>
            <person name="Gu Z."/>
            <person name="Guan P."/>
            <person name="Guigo R."/>
            <person name="Hillenmeyer M.E."/>
            <person name="Hladun S.L."/>
            <person name="Hogan J.R."/>
            <person name="Hong Y.S."/>
            <person name="Hoover J."/>
            <person name="Jaillon O."/>
            <person name="Ke Z."/>
            <person name="Kodira C.D."/>
            <person name="Kokoza E."/>
            <person name="Koutsos A."/>
            <person name="Letunic I."/>
            <person name="Levitsky A.A."/>
            <person name="Liang Y."/>
            <person name="Lin J.-J."/>
            <person name="Lobo N.F."/>
            <person name="Lopez J.R."/>
            <person name="Malek J.A."/>
            <person name="McIntosh T.C."/>
            <person name="Meister S."/>
            <person name="Miller J.R."/>
            <person name="Mobarry C."/>
            <person name="Mongin E."/>
            <person name="Murphy S.D."/>
            <person name="O'Brochta D.A."/>
            <person name="Pfannkoch C."/>
            <person name="Qi R."/>
            <person name="Regier M.A."/>
            <person name="Remington K."/>
            <person name="Shao H."/>
            <person name="Sharakhova M.V."/>
            <person name="Sitter C.D."/>
            <person name="Shetty J."/>
            <person name="Smith T.J."/>
            <person name="Strong R."/>
            <person name="Sun J."/>
            <person name="Thomasova D."/>
            <person name="Ton L.Q."/>
            <person name="Topalis P."/>
            <person name="Tu Z.J."/>
            <person name="Unger M.F."/>
            <person name="Walenz B."/>
            <person name="Wang A.H."/>
            <person name="Wang J."/>
            <person name="Wang M."/>
            <person name="Wang X."/>
            <person name="Woodford K.J."/>
            <person name="Wortman J.R."/>
            <person name="Wu M."/>
            <person name="Yao A."/>
            <person name="Zdobnov E.M."/>
            <person name="Zhang H."/>
            <person name="Zhao Q."/>
            <person name="Zhao S."/>
            <person name="Zhu S.C."/>
            <person name="Zhimulev I."/>
            <person name="Coluzzi M."/>
            <person name="della Torre A."/>
            <person name="Roth C.W."/>
            <person name="Louis C."/>
            <person name="Kalush F."/>
            <person name="Mural R.J."/>
            <person name="Myers E.W."/>
            <person name="Adams M.D."/>
            <person name="Smith H.O."/>
            <person name="Broder S."/>
            <person name="Gardner M.J."/>
            <person name="Fraser C.M."/>
            <person name="Birney E."/>
            <person name="Bork P."/>
            <person name="Brey P.T."/>
            <person name="Venter J.C."/>
            <person name="Weissenbach J."/>
            <person name="Kafatos F.C."/>
            <person name="Collins F.H."/>
            <person name="Hoffman S.L."/>
        </authorList>
    </citation>
    <scope>NUCLEOTIDE SEQUENCE [LARGE SCALE GENOMIC DNA]</scope>
    <source>
        <strain>PEST</strain>
    </source>
</reference>
<organism>
    <name type="scientific">Anopheles gambiae</name>
    <name type="common">African malaria mosquito</name>
    <dbReference type="NCBI Taxonomy" id="7165"/>
    <lineage>
        <taxon>Eukaryota</taxon>
        <taxon>Metazoa</taxon>
        <taxon>Ecdysozoa</taxon>
        <taxon>Arthropoda</taxon>
        <taxon>Hexapoda</taxon>
        <taxon>Insecta</taxon>
        <taxon>Pterygota</taxon>
        <taxon>Neoptera</taxon>
        <taxon>Endopterygota</taxon>
        <taxon>Diptera</taxon>
        <taxon>Nematocera</taxon>
        <taxon>Culicoidea</taxon>
        <taxon>Culicidae</taxon>
        <taxon>Anophelinae</taxon>
        <taxon>Anopheles</taxon>
    </lineage>
</organism>
<dbReference type="EMBL" id="AAAB01008984">
    <property type="protein sequence ID" value="EAA14891.2"/>
    <property type="molecule type" value="Genomic_DNA"/>
</dbReference>
<dbReference type="RefSeq" id="XP_319630.2">
    <property type="nucleotide sequence ID" value="XM_319630.3"/>
</dbReference>
<dbReference type="SMR" id="Q7PWQ6"/>
<dbReference type="FunCoup" id="Q7PWQ6">
    <property type="interactions" value="2377"/>
</dbReference>
<dbReference type="STRING" id="7165.Q7PWQ6"/>
<dbReference type="PaxDb" id="7165-AGAP008883-PA"/>
<dbReference type="EnsemblMetazoa" id="AGAP008883-RA">
    <property type="protein sequence ID" value="AGAP008883-PA"/>
    <property type="gene ID" value="AGAP008883"/>
</dbReference>
<dbReference type="GeneID" id="1279851"/>
<dbReference type="KEGG" id="aga:1279851"/>
<dbReference type="CTD" id="57019"/>
<dbReference type="VEuPathDB" id="VectorBase:AGAMI1_008383"/>
<dbReference type="VEuPathDB" id="VectorBase:AGAP008883"/>
<dbReference type="eggNOG" id="KOG4020">
    <property type="taxonomic scope" value="Eukaryota"/>
</dbReference>
<dbReference type="HOGENOM" id="CLU_064393_1_0_1"/>
<dbReference type="InParanoid" id="Q7PWQ6"/>
<dbReference type="OMA" id="GFINCRE"/>
<dbReference type="PhylomeDB" id="Q7PWQ6"/>
<dbReference type="Proteomes" id="UP000007062">
    <property type="component" value="Chromosome 3R"/>
</dbReference>
<dbReference type="GO" id="GO:0005737">
    <property type="term" value="C:cytoplasm"/>
    <property type="evidence" value="ECO:0000318"/>
    <property type="project" value="GO_Central"/>
</dbReference>
<dbReference type="GO" id="GO:0005758">
    <property type="term" value="C:mitochondrial intermembrane space"/>
    <property type="evidence" value="ECO:0007669"/>
    <property type="project" value="UniProtKB-SubCell"/>
</dbReference>
<dbReference type="GO" id="GO:0051537">
    <property type="term" value="F:2 iron, 2 sulfur cluster binding"/>
    <property type="evidence" value="ECO:0007669"/>
    <property type="project" value="UniProtKB-UniRule"/>
</dbReference>
<dbReference type="GO" id="GO:0051539">
    <property type="term" value="F:4 iron, 4 sulfur cluster binding"/>
    <property type="evidence" value="ECO:0007669"/>
    <property type="project" value="UniProtKB-KW"/>
</dbReference>
<dbReference type="GO" id="GO:0009055">
    <property type="term" value="F:electron transfer activity"/>
    <property type="evidence" value="ECO:0007669"/>
    <property type="project" value="UniProtKB-UniRule"/>
</dbReference>
<dbReference type="GO" id="GO:0046872">
    <property type="term" value="F:metal ion binding"/>
    <property type="evidence" value="ECO:0007669"/>
    <property type="project" value="UniProtKB-KW"/>
</dbReference>
<dbReference type="GO" id="GO:0016226">
    <property type="term" value="P:iron-sulfur cluster assembly"/>
    <property type="evidence" value="ECO:0000318"/>
    <property type="project" value="GO_Central"/>
</dbReference>
<dbReference type="Gene3D" id="3.40.50.150">
    <property type="entry name" value="Vaccinia Virus protein VP39"/>
    <property type="match status" value="1"/>
</dbReference>
<dbReference type="HAMAP" id="MF_03115">
    <property type="entry name" value="Anamorsin"/>
    <property type="match status" value="1"/>
</dbReference>
<dbReference type="InterPro" id="IPR007785">
    <property type="entry name" value="Anamorsin"/>
</dbReference>
<dbReference type="InterPro" id="IPR049011">
    <property type="entry name" value="Anamorsin_N_metazoan"/>
</dbReference>
<dbReference type="InterPro" id="IPR046408">
    <property type="entry name" value="CIAPIN1"/>
</dbReference>
<dbReference type="InterPro" id="IPR029063">
    <property type="entry name" value="SAM-dependent_MTases_sf"/>
</dbReference>
<dbReference type="PANTHER" id="PTHR13273">
    <property type="entry name" value="ANAMORSIN"/>
    <property type="match status" value="1"/>
</dbReference>
<dbReference type="PANTHER" id="PTHR13273:SF14">
    <property type="entry name" value="ANAMORSIN"/>
    <property type="match status" value="1"/>
</dbReference>
<dbReference type="Pfam" id="PF20922">
    <property type="entry name" value="Anamorsin_N"/>
    <property type="match status" value="1"/>
</dbReference>
<dbReference type="Pfam" id="PF05093">
    <property type="entry name" value="CIAPIN1"/>
    <property type="match status" value="1"/>
</dbReference>
<sequence>MNFVQENNHVLYLWAGTVGPEIEQEVNAIKTIPNVQVNVENVERLQLAEYGKSQFDVILAQVATGNSTLVTLLVKLLKPKGKCVFRDDSAASIEQARSNLLLAGFINIVASDSNVYVAEKPDYEVGSKSKLSFAKKSNVAAVWKLDDNEEEERIDDEELLDEDDKAKPTEESLRVCGTTGKRKACKDCSCGLAEELDAEAKGKALTDTSAAKSSCGSCYLGDAFRCATCPYLGMPAFKPGEKIVLTDTQMQADI</sequence>
<accession>Q7PWQ6</accession>
<comment type="function">
    <text evidence="1">Component of the cytosolic iron-sulfur (Fe-S) protein assembly (CIA) machinery. Required for the maturation of extramitochondrial Fe-S proteins. Part of an electron transfer chain functioning in an early step of cytosolic Fe-S biogenesis, facilitating the de novo assembly of a [4Fe-4S] cluster on the cytosolic Fe-S scaffold complex. Electrons are transferred from NADPH via a FAD- and FMN-containing diflavin oxidoreductase. Together with the diflavin oxidoreductase, also required for the assembly of the diferric tyrosyl radical cofactor of ribonucleotide reductase (RNR), probably by providing electrons for reduction during radical cofactor maturation in the catalytic small subunit.</text>
</comment>
<comment type="cofactor">
    <cofactor evidence="1">
        <name>[2Fe-2S] cluster</name>
        <dbReference type="ChEBI" id="CHEBI:190135"/>
    </cofactor>
</comment>
<comment type="cofactor">
    <cofactor evidence="1">
        <name>[4Fe-4S] cluster</name>
        <dbReference type="ChEBI" id="CHEBI:49883"/>
    </cofactor>
</comment>
<comment type="subunit">
    <text evidence="1">Monomer.</text>
</comment>
<comment type="subcellular location">
    <subcellularLocation>
        <location evidence="1">Cytoplasm</location>
    </subcellularLocation>
    <subcellularLocation>
        <location evidence="1">Mitochondrion intermembrane space</location>
    </subcellularLocation>
</comment>
<comment type="domain">
    <text evidence="1">The C-terminal domain binds 2 Fe-S clusters but is otherwise mostly in an intrinsically disordered conformation.</text>
</comment>
<comment type="domain">
    <text evidence="1">The N-terminal domain has structural similarity with S-adenosyl-L-methionine-dependent methyltransferases, but does not bind S-adenosyl-L-methionine. It is required for correct assembly of the 2 Fe-S clusters.</text>
</comment>
<comment type="domain">
    <text evidence="1">The twin Cx2C motifs are involved in the recognition by the mitochondrial MIA40-ERV1 disulfide relay system. The formation of 2 disulfide bonds in the Cx2C motifs through dithiol/disulfide exchange reactions effectively traps the protein in the mitochondrial intermembrane space.</text>
</comment>
<comment type="similarity">
    <text evidence="1">Belongs to the anamorsin family.</text>
</comment>
<feature type="chain" id="PRO_0000392312" description="Anamorsin homolog">
    <location>
        <begin position="1"/>
        <end position="254"/>
    </location>
</feature>
<feature type="region of interest" description="N-terminal SAM-like domain" evidence="1">
    <location>
        <begin position="4"/>
        <end position="133"/>
    </location>
</feature>
<feature type="region of interest" description="Linker" evidence="1">
    <location>
        <begin position="134"/>
        <end position="165"/>
    </location>
</feature>
<feature type="region of interest" description="Fe-S binding site A" evidence="1">
    <location>
        <begin position="176"/>
        <end position="190"/>
    </location>
</feature>
<feature type="region of interest" description="Fe-S binding site B" evidence="1">
    <location>
        <begin position="215"/>
        <end position="229"/>
    </location>
</feature>
<feature type="short sequence motif" description="Cx2C motif 1" evidence="1">
    <location>
        <begin position="215"/>
        <end position="218"/>
    </location>
</feature>
<feature type="short sequence motif" description="Cx2C motif 2" evidence="1">
    <location>
        <begin position="226"/>
        <end position="229"/>
    </location>
</feature>
<feature type="binding site" evidence="1">
    <location>
        <position position="176"/>
    </location>
    <ligand>
        <name>[2Fe-2S] cluster</name>
        <dbReference type="ChEBI" id="CHEBI:190135"/>
    </ligand>
</feature>
<feature type="binding site" evidence="1">
    <location>
        <position position="185"/>
    </location>
    <ligand>
        <name>[2Fe-2S] cluster</name>
        <dbReference type="ChEBI" id="CHEBI:190135"/>
    </ligand>
</feature>
<feature type="binding site" evidence="1">
    <location>
        <position position="188"/>
    </location>
    <ligand>
        <name>[2Fe-2S] cluster</name>
        <dbReference type="ChEBI" id="CHEBI:190135"/>
    </ligand>
</feature>
<feature type="binding site" evidence="1">
    <location>
        <position position="190"/>
    </location>
    <ligand>
        <name>[2Fe-2S] cluster</name>
        <dbReference type="ChEBI" id="CHEBI:190135"/>
    </ligand>
</feature>
<feature type="binding site" evidence="1">
    <location>
        <position position="215"/>
    </location>
    <ligand>
        <name>[4Fe-4S] cluster</name>
        <dbReference type="ChEBI" id="CHEBI:49883"/>
    </ligand>
</feature>
<feature type="binding site" evidence="1">
    <location>
        <position position="218"/>
    </location>
    <ligand>
        <name>[4Fe-4S] cluster</name>
        <dbReference type="ChEBI" id="CHEBI:49883"/>
    </ligand>
</feature>
<feature type="binding site" evidence="1">
    <location>
        <position position="226"/>
    </location>
    <ligand>
        <name>[4Fe-4S] cluster</name>
        <dbReference type="ChEBI" id="CHEBI:49883"/>
    </ligand>
</feature>
<feature type="binding site" evidence="1">
    <location>
        <position position="229"/>
    </location>
    <ligand>
        <name>[4Fe-4S] cluster</name>
        <dbReference type="ChEBI" id="CHEBI:49883"/>
    </ligand>
</feature>
<protein>
    <recommendedName>
        <fullName evidence="1">Anamorsin homolog</fullName>
    </recommendedName>
    <alternativeName>
        <fullName evidence="1">Fe-S cluster assembly protein DRE2 homolog</fullName>
    </alternativeName>
</protein>
<keyword id="KW-0001">2Fe-2S</keyword>
<keyword id="KW-0004">4Fe-4S</keyword>
<keyword id="KW-0963">Cytoplasm</keyword>
<keyword id="KW-0408">Iron</keyword>
<keyword id="KW-0411">Iron-sulfur</keyword>
<keyword id="KW-0479">Metal-binding</keyword>
<keyword id="KW-0496">Mitochondrion</keyword>
<keyword id="KW-1185">Reference proteome</keyword>
<gene>
    <name type="ORF">AGAP008883</name>
</gene>
<proteinExistence type="inferred from homology"/>
<evidence type="ECO:0000255" key="1">
    <source>
        <dbReference type="HAMAP-Rule" id="MF_03115"/>
    </source>
</evidence>